<name>RS9_LACLM</name>
<dbReference type="EMBL" id="AM406671">
    <property type="protein sequence ID" value="CAL99107.1"/>
    <property type="molecule type" value="Genomic_DNA"/>
</dbReference>
<dbReference type="RefSeq" id="WP_004254378.1">
    <property type="nucleotide sequence ID" value="NZ_WJVF01000037.1"/>
</dbReference>
<dbReference type="PDB" id="5MYJ">
    <property type="method" value="EM"/>
    <property type="resolution" value="5.60 A"/>
    <property type="chains" value="AI=1-130"/>
</dbReference>
<dbReference type="PDBsum" id="5MYJ"/>
<dbReference type="EMDB" id="EMD-3581"/>
<dbReference type="SMR" id="A2RP61"/>
<dbReference type="STRING" id="416870.llmg_2545"/>
<dbReference type="GeneID" id="89634602"/>
<dbReference type="KEGG" id="llm:llmg_2545"/>
<dbReference type="eggNOG" id="COG0103">
    <property type="taxonomic scope" value="Bacteria"/>
</dbReference>
<dbReference type="HOGENOM" id="CLU_046483_2_1_9"/>
<dbReference type="OrthoDB" id="9803965at2"/>
<dbReference type="PhylomeDB" id="A2RP61"/>
<dbReference type="Proteomes" id="UP000000364">
    <property type="component" value="Chromosome"/>
</dbReference>
<dbReference type="GO" id="GO:0022627">
    <property type="term" value="C:cytosolic small ribosomal subunit"/>
    <property type="evidence" value="ECO:0007669"/>
    <property type="project" value="TreeGrafter"/>
</dbReference>
<dbReference type="GO" id="GO:0003723">
    <property type="term" value="F:RNA binding"/>
    <property type="evidence" value="ECO:0007669"/>
    <property type="project" value="TreeGrafter"/>
</dbReference>
<dbReference type="GO" id="GO:0003735">
    <property type="term" value="F:structural constituent of ribosome"/>
    <property type="evidence" value="ECO:0007669"/>
    <property type="project" value="InterPro"/>
</dbReference>
<dbReference type="GO" id="GO:0006412">
    <property type="term" value="P:translation"/>
    <property type="evidence" value="ECO:0007669"/>
    <property type="project" value="UniProtKB-UniRule"/>
</dbReference>
<dbReference type="FunFam" id="3.30.230.10:FF:000001">
    <property type="entry name" value="30S ribosomal protein S9"/>
    <property type="match status" value="1"/>
</dbReference>
<dbReference type="Gene3D" id="3.30.230.10">
    <property type="match status" value="1"/>
</dbReference>
<dbReference type="HAMAP" id="MF_00532_B">
    <property type="entry name" value="Ribosomal_uS9_B"/>
    <property type="match status" value="1"/>
</dbReference>
<dbReference type="InterPro" id="IPR020568">
    <property type="entry name" value="Ribosomal_Su5_D2-typ_SF"/>
</dbReference>
<dbReference type="InterPro" id="IPR000754">
    <property type="entry name" value="Ribosomal_uS9"/>
</dbReference>
<dbReference type="InterPro" id="IPR023035">
    <property type="entry name" value="Ribosomal_uS9_bac/plastid"/>
</dbReference>
<dbReference type="InterPro" id="IPR020574">
    <property type="entry name" value="Ribosomal_uS9_CS"/>
</dbReference>
<dbReference type="InterPro" id="IPR014721">
    <property type="entry name" value="Ribsml_uS5_D2-typ_fold_subgr"/>
</dbReference>
<dbReference type="NCBIfam" id="NF001099">
    <property type="entry name" value="PRK00132.1"/>
    <property type="match status" value="1"/>
</dbReference>
<dbReference type="PANTHER" id="PTHR21569">
    <property type="entry name" value="RIBOSOMAL PROTEIN S9"/>
    <property type="match status" value="1"/>
</dbReference>
<dbReference type="PANTHER" id="PTHR21569:SF1">
    <property type="entry name" value="SMALL RIBOSOMAL SUBUNIT PROTEIN US9M"/>
    <property type="match status" value="1"/>
</dbReference>
<dbReference type="Pfam" id="PF00380">
    <property type="entry name" value="Ribosomal_S9"/>
    <property type="match status" value="1"/>
</dbReference>
<dbReference type="SUPFAM" id="SSF54211">
    <property type="entry name" value="Ribosomal protein S5 domain 2-like"/>
    <property type="match status" value="1"/>
</dbReference>
<dbReference type="PROSITE" id="PS00360">
    <property type="entry name" value="RIBOSOMAL_S9"/>
    <property type="match status" value="1"/>
</dbReference>
<keyword id="KW-0002">3D-structure</keyword>
<keyword id="KW-0687">Ribonucleoprotein</keyword>
<keyword id="KW-0689">Ribosomal protein</keyword>
<gene>
    <name evidence="1" type="primary">rpsI</name>
    <name type="ordered locus">llmg_2545</name>
</gene>
<proteinExistence type="evidence at protein level"/>
<accession>A2RP61</accession>
<reference key="1">
    <citation type="journal article" date="2007" name="J. Bacteriol.">
        <title>The complete genome sequence of the lactic acid bacterial paradigm Lactococcus lactis subsp. cremoris MG1363.</title>
        <authorList>
            <person name="Wegmann U."/>
            <person name="O'Connell-Motherway M."/>
            <person name="Zomer A."/>
            <person name="Buist G."/>
            <person name="Shearman C."/>
            <person name="Canchaya C."/>
            <person name="Ventura M."/>
            <person name="Goesmann A."/>
            <person name="Gasson M.J."/>
            <person name="Kuipers O.P."/>
            <person name="van Sinderen D."/>
            <person name="Kok J."/>
        </authorList>
    </citation>
    <scope>NUCLEOTIDE SEQUENCE [LARGE SCALE GENOMIC DNA]</scope>
    <source>
        <strain>MG1363</strain>
    </source>
</reference>
<sequence length="130" mass="14098">MAQVQYAGTGRRKNAVARVRLVPGTGKITVNGREVESYIPHADMRLVINQPFAATQTEGSYDTLVNVNGGGVSGQAGAIRHGIARALLQVDPDFRSALKRAGLLTRDARMVERKKPGLKKARKASQFSKR</sequence>
<evidence type="ECO:0000255" key="1">
    <source>
        <dbReference type="HAMAP-Rule" id="MF_00532"/>
    </source>
</evidence>
<evidence type="ECO:0000256" key="2">
    <source>
        <dbReference type="SAM" id="MobiDB-lite"/>
    </source>
</evidence>
<evidence type="ECO:0000305" key="3"/>
<organism>
    <name type="scientific">Lactococcus lactis subsp. cremoris (strain MG1363)</name>
    <dbReference type="NCBI Taxonomy" id="416870"/>
    <lineage>
        <taxon>Bacteria</taxon>
        <taxon>Bacillati</taxon>
        <taxon>Bacillota</taxon>
        <taxon>Bacilli</taxon>
        <taxon>Lactobacillales</taxon>
        <taxon>Streptococcaceae</taxon>
        <taxon>Lactococcus</taxon>
        <taxon>Lactococcus cremoris subsp. cremoris</taxon>
    </lineage>
</organism>
<feature type="chain" id="PRO_1000051241" description="Small ribosomal subunit protein uS9">
    <location>
        <begin position="1"/>
        <end position="130"/>
    </location>
</feature>
<feature type="region of interest" description="Disordered" evidence="2">
    <location>
        <begin position="111"/>
        <end position="130"/>
    </location>
</feature>
<feature type="compositionally biased region" description="Basic residues" evidence="2">
    <location>
        <begin position="116"/>
        <end position="130"/>
    </location>
</feature>
<comment type="similarity">
    <text evidence="1">Belongs to the universal ribosomal protein uS9 family.</text>
</comment>
<protein>
    <recommendedName>
        <fullName evidence="1">Small ribosomal subunit protein uS9</fullName>
    </recommendedName>
    <alternativeName>
        <fullName evidence="3">30S ribosomal protein S9</fullName>
    </alternativeName>
</protein>